<reference key="1">
    <citation type="journal article" date="2011" name="J. Bacteriol.">
        <title>Comparative genomics of 28 Salmonella enterica isolates: evidence for CRISPR-mediated adaptive sublineage evolution.</title>
        <authorList>
            <person name="Fricke W.F."/>
            <person name="Mammel M.K."/>
            <person name="McDermott P.F."/>
            <person name="Tartera C."/>
            <person name="White D.G."/>
            <person name="Leclerc J.E."/>
            <person name="Ravel J."/>
            <person name="Cebula T.A."/>
        </authorList>
    </citation>
    <scope>NUCLEOTIDE SEQUENCE [LARGE SCALE GENOMIC DNA]</scope>
    <source>
        <strain>SL476</strain>
    </source>
</reference>
<evidence type="ECO:0000255" key="1">
    <source>
        <dbReference type="HAMAP-Rule" id="MF_00291"/>
    </source>
</evidence>
<evidence type="ECO:0000305" key="2"/>
<organism>
    <name type="scientific">Salmonella heidelberg (strain SL476)</name>
    <dbReference type="NCBI Taxonomy" id="454169"/>
    <lineage>
        <taxon>Bacteria</taxon>
        <taxon>Pseudomonadati</taxon>
        <taxon>Pseudomonadota</taxon>
        <taxon>Gammaproteobacteria</taxon>
        <taxon>Enterobacterales</taxon>
        <taxon>Enterobacteriaceae</taxon>
        <taxon>Salmonella</taxon>
    </lineage>
</organism>
<gene>
    <name evidence="1" type="primary">rpsB</name>
    <name type="ordered locus">SeHA_C0254</name>
</gene>
<accession>B4TK44</accession>
<protein>
    <recommendedName>
        <fullName evidence="1">Small ribosomal subunit protein uS2</fullName>
    </recommendedName>
    <alternativeName>
        <fullName evidence="2">30S ribosomal protein S2</fullName>
    </alternativeName>
</protein>
<sequence>MATVSMRDMLKAGVHFGHQTRYWNPKMKPFIFGARNKVHIINLEKTVPMFNEALAELNKISARKGKILFVGTKRAASEAVKEAANSCDQFFVNHRWLGGMLTNWKTVRQSIKRLKDLETQSQDGTFEKLTKKEALMRTRELEKLENSLGGIKDMGGLPDALFVIDADHEHIAIKEANNLGIPVFAIVDTNSDPDGVDFVIPGNDDAIRAVSLYLGAVAATVREGRSQDLASQAEESFVEAE</sequence>
<comment type="similarity">
    <text evidence="1">Belongs to the universal ribosomal protein uS2 family.</text>
</comment>
<dbReference type="EMBL" id="CP001120">
    <property type="protein sequence ID" value="ACF69750.1"/>
    <property type="molecule type" value="Genomic_DNA"/>
</dbReference>
<dbReference type="RefSeq" id="WP_000246886.1">
    <property type="nucleotide sequence ID" value="NC_011083.1"/>
</dbReference>
<dbReference type="SMR" id="B4TK44"/>
<dbReference type="KEGG" id="seh:SeHA_C0254"/>
<dbReference type="HOGENOM" id="CLU_040318_1_0_6"/>
<dbReference type="Proteomes" id="UP000001866">
    <property type="component" value="Chromosome"/>
</dbReference>
<dbReference type="GO" id="GO:0022627">
    <property type="term" value="C:cytosolic small ribosomal subunit"/>
    <property type="evidence" value="ECO:0007669"/>
    <property type="project" value="TreeGrafter"/>
</dbReference>
<dbReference type="GO" id="GO:0003735">
    <property type="term" value="F:structural constituent of ribosome"/>
    <property type="evidence" value="ECO:0007669"/>
    <property type="project" value="InterPro"/>
</dbReference>
<dbReference type="GO" id="GO:0006412">
    <property type="term" value="P:translation"/>
    <property type="evidence" value="ECO:0007669"/>
    <property type="project" value="UniProtKB-UniRule"/>
</dbReference>
<dbReference type="CDD" id="cd01425">
    <property type="entry name" value="RPS2"/>
    <property type="match status" value="1"/>
</dbReference>
<dbReference type="FunFam" id="1.10.287.610:FF:000001">
    <property type="entry name" value="30S ribosomal protein S2"/>
    <property type="match status" value="1"/>
</dbReference>
<dbReference type="Gene3D" id="3.40.50.10490">
    <property type="entry name" value="Glucose-6-phosphate isomerase like protein, domain 1"/>
    <property type="match status" value="1"/>
</dbReference>
<dbReference type="Gene3D" id="1.10.287.610">
    <property type="entry name" value="Helix hairpin bin"/>
    <property type="match status" value="1"/>
</dbReference>
<dbReference type="HAMAP" id="MF_00291_B">
    <property type="entry name" value="Ribosomal_uS2_B"/>
    <property type="match status" value="1"/>
</dbReference>
<dbReference type="InterPro" id="IPR001865">
    <property type="entry name" value="Ribosomal_uS2"/>
</dbReference>
<dbReference type="InterPro" id="IPR005706">
    <property type="entry name" value="Ribosomal_uS2_bac/mit/plastid"/>
</dbReference>
<dbReference type="InterPro" id="IPR018130">
    <property type="entry name" value="Ribosomal_uS2_CS"/>
</dbReference>
<dbReference type="InterPro" id="IPR023591">
    <property type="entry name" value="Ribosomal_uS2_flav_dom_sf"/>
</dbReference>
<dbReference type="NCBIfam" id="TIGR01011">
    <property type="entry name" value="rpsB_bact"/>
    <property type="match status" value="1"/>
</dbReference>
<dbReference type="PANTHER" id="PTHR12534">
    <property type="entry name" value="30S RIBOSOMAL PROTEIN S2 PROKARYOTIC AND ORGANELLAR"/>
    <property type="match status" value="1"/>
</dbReference>
<dbReference type="PANTHER" id="PTHR12534:SF0">
    <property type="entry name" value="SMALL RIBOSOMAL SUBUNIT PROTEIN US2M"/>
    <property type="match status" value="1"/>
</dbReference>
<dbReference type="Pfam" id="PF00318">
    <property type="entry name" value="Ribosomal_S2"/>
    <property type="match status" value="1"/>
</dbReference>
<dbReference type="PRINTS" id="PR00395">
    <property type="entry name" value="RIBOSOMALS2"/>
</dbReference>
<dbReference type="SUPFAM" id="SSF52313">
    <property type="entry name" value="Ribosomal protein S2"/>
    <property type="match status" value="1"/>
</dbReference>
<dbReference type="PROSITE" id="PS00962">
    <property type="entry name" value="RIBOSOMAL_S2_1"/>
    <property type="match status" value="1"/>
</dbReference>
<dbReference type="PROSITE" id="PS00963">
    <property type="entry name" value="RIBOSOMAL_S2_2"/>
    <property type="match status" value="1"/>
</dbReference>
<feature type="chain" id="PRO_1000115054" description="Small ribosomal subunit protein uS2">
    <location>
        <begin position="1"/>
        <end position="241"/>
    </location>
</feature>
<name>RS2_SALHS</name>
<keyword id="KW-0687">Ribonucleoprotein</keyword>
<keyword id="KW-0689">Ribosomal protein</keyword>
<proteinExistence type="inferred from homology"/>